<name>NCAP_I73A3</name>
<organismHost>
    <name type="scientific">Aves</name>
    <dbReference type="NCBI Taxonomy" id="8782"/>
</organismHost>
<organismHost>
    <name type="scientific">Cetacea</name>
    <name type="common">whales</name>
    <dbReference type="NCBI Taxonomy" id="9721"/>
</organismHost>
<organismHost>
    <name type="scientific">Homo sapiens</name>
    <name type="common">Human</name>
    <dbReference type="NCBI Taxonomy" id="9606"/>
</organismHost>
<organismHost>
    <name type="scientific">Phocidae</name>
    <name type="common">true seals</name>
    <dbReference type="NCBI Taxonomy" id="9709"/>
</organismHost>
<organismHost>
    <name type="scientific">Sus scrofa</name>
    <name type="common">Pig</name>
    <dbReference type="NCBI Taxonomy" id="9823"/>
</organismHost>
<organism>
    <name type="scientific">Influenza A virus (strain A/Memphis/1/1973 H3N2)</name>
    <dbReference type="NCBI Taxonomy" id="383582"/>
    <lineage>
        <taxon>Viruses</taxon>
        <taxon>Riboviria</taxon>
        <taxon>Orthornavirae</taxon>
        <taxon>Negarnaviricota</taxon>
        <taxon>Polyploviricotina</taxon>
        <taxon>Insthoviricetes</taxon>
        <taxon>Articulavirales</taxon>
        <taxon>Orthomyxoviridae</taxon>
        <taxon>Alphainfluenzavirus</taxon>
        <taxon>Alphainfluenzavirus influenzae</taxon>
        <taxon>Influenza A virus</taxon>
    </lineage>
</organism>
<reference key="1">
    <citation type="journal article" date="1993" name="J. Virol.">
        <title>Analysis of the evolution and variation of the human influenza A virus nucleoprotein gene from 1933 to 1990.</title>
        <authorList>
            <person name="Shu L.L."/>
            <person name="Bean W.J."/>
            <person name="Webster R.G."/>
        </authorList>
    </citation>
    <scope>NUCLEOTIDE SEQUENCE [GENOMIC RNA]</scope>
</reference>
<sequence>MASQGTKRSYEQMETDGERQNATEIRASVGKMIDGIGRFYIQMCTELKLSDYEGRLIQNSLTIERMVLSAFDERRNRYLEEHPSAGKDPKKTGGPIYKRVDGKWMRELVLYDKEEIRRIWRQANNGDDATRGLTHMMIWHSNLNDTTYQRTRALVRTGMDPRMCSLMQGSTLPRRSGAAGAAVKGVGTMVMELIRMIKRGINDRNFWRGENGRKTRGAYERMCNILKGKFQTAAQRAMMDQVRESRNPGNAEIEDLIFLARSALILRGSVAHKSCLPACVYGPAVASGYNFEKEGYSLVGIDPFKLLQNSQVYSLIRPNENPAHKSQLVWMACNSAAFEDLRLLSFIRGTKVSPRGKLSTRGVQIASNENMDTMESSTLELRSRYWAIRTRSGGNTNQQRASAGQISVQPAFSVQRNLPFDKSTIMAAFTGNTEGRTSDMRAEIIRMMEGAKPEEVSFRGRGVFELSDEKATNPIVPSFDMSNEGSYFFGDNAEEYDN</sequence>
<evidence type="ECO:0000255" key="1">
    <source>
        <dbReference type="HAMAP-Rule" id="MF_04070"/>
    </source>
</evidence>
<evidence type="ECO:0000256" key="2">
    <source>
        <dbReference type="SAM" id="MobiDB-lite"/>
    </source>
</evidence>
<keyword id="KW-0167">Capsid protein</keyword>
<keyword id="KW-1139">Helical capsid protein</keyword>
<keyword id="KW-1048">Host nucleus</keyword>
<keyword id="KW-0945">Host-virus interaction</keyword>
<keyword id="KW-0687">Ribonucleoprotein</keyword>
<keyword id="KW-0694">RNA-binding</keyword>
<keyword id="KW-0543">Viral nucleoprotein</keyword>
<keyword id="KW-1163">Viral penetration into host nucleus</keyword>
<keyword id="KW-0946">Virion</keyword>
<keyword id="KW-1160">Virus entry into host cell</keyword>
<protein>
    <recommendedName>
        <fullName evidence="1">Nucleoprotein</fullName>
    </recommendedName>
    <alternativeName>
        <fullName evidence="1">Nucleocapsid protein</fullName>
        <shortName evidence="1">Protein N</shortName>
    </alternativeName>
</protein>
<comment type="function">
    <text evidence="1">Encapsidates the negative strand viral RNA, protecting it from nucleases. The encapsidated genomic RNA is termed the ribonucleoprotein (RNP) and serves as template for transcription and replication. The RNP needs to be localized in the host nucleus to start an infectious cycle, but is too large to diffuse through the nuclear pore complex. NP comprises at least 2 nuclear localization signals that are responsible for the active RNP import into the nucleus through cellular importin alpha/beta pathway. Later in the infection, nclear export of RNPs are mediated through viral proteins NEP interacting with M1 which binds nucleoproteins. It is possible that nucleoprotein binds directly host exportin-1/XPO1 and plays an active role in RNPs nuclear export. M1 interaction with RNP seems to hide nucleoprotein's nuclear localization signals. Soon after a virion infects a new cell, M1 dissociates from the RNP under acidification of the virion driven by M2 protein. Dissociation of M1 from RNP unmasks nucleoprotein's nuclear localization signals, targeting the RNP to the nucleus.</text>
</comment>
<comment type="subunit">
    <text evidence="1">Homomultimerizes to form the nucleocapsid. May bind host exportin-1/XPO1. Binds to viral genomic RNA. Protein-RNA contacts are mediated by a combination of electrostatic interactions between positively charged residues and the phosphate backbone and planar interactions between aromatic side chains and bases.</text>
</comment>
<comment type="subcellular location">
    <subcellularLocation>
        <location evidence="1">Virion</location>
    </subcellularLocation>
    <subcellularLocation>
        <location evidence="1">Host nucleus</location>
    </subcellularLocation>
</comment>
<comment type="PTM">
    <text evidence="1">Late in virus-infected cells, may be cleaved from a 56-kDa protein to a 53-kDa protein by a cellular caspase. This cleavage might be a marker for the onset of apoptosis in infected cells or have a specific function in virus host interaction.</text>
</comment>
<comment type="similarity">
    <text evidence="1">Belongs to the influenza viruses nucleoprotein family.</text>
</comment>
<dbReference type="EMBL" id="L07346">
    <property type="protein sequence ID" value="AAA51500.1"/>
    <property type="molecule type" value="Genomic_RNA"/>
</dbReference>
<dbReference type="SMR" id="Q08031"/>
<dbReference type="GO" id="GO:0019029">
    <property type="term" value="C:helical viral capsid"/>
    <property type="evidence" value="ECO:0007669"/>
    <property type="project" value="UniProtKB-UniRule"/>
</dbReference>
<dbReference type="GO" id="GO:0043657">
    <property type="term" value="C:host cell"/>
    <property type="evidence" value="ECO:0007669"/>
    <property type="project" value="GOC"/>
</dbReference>
<dbReference type="GO" id="GO:0042025">
    <property type="term" value="C:host cell nucleus"/>
    <property type="evidence" value="ECO:0007669"/>
    <property type="project" value="UniProtKB-SubCell"/>
</dbReference>
<dbReference type="GO" id="GO:1990904">
    <property type="term" value="C:ribonucleoprotein complex"/>
    <property type="evidence" value="ECO:0007669"/>
    <property type="project" value="UniProtKB-KW"/>
</dbReference>
<dbReference type="GO" id="GO:0019013">
    <property type="term" value="C:viral nucleocapsid"/>
    <property type="evidence" value="ECO:0007669"/>
    <property type="project" value="UniProtKB-UniRule"/>
</dbReference>
<dbReference type="GO" id="GO:0003723">
    <property type="term" value="F:RNA binding"/>
    <property type="evidence" value="ECO:0007669"/>
    <property type="project" value="UniProtKB-UniRule"/>
</dbReference>
<dbReference type="GO" id="GO:0005198">
    <property type="term" value="F:structural molecule activity"/>
    <property type="evidence" value="ECO:0007669"/>
    <property type="project" value="UniProtKB-UniRule"/>
</dbReference>
<dbReference type="GO" id="GO:0046718">
    <property type="term" value="P:symbiont entry into host cell"/>
    <property type="evidence" value="ECO:0007669"/>
    <property type="project" value="UniProtKB-KW"/>
</dbReference>
<dbReference type="GO" id="GO:0075732">
    <property type="term" value="P:viral penetration into host nucleus"/>
    <property type="evidence" value="ECO:0007669"/>
    <property type="project" value="UniProtKB-UniRule"/>
</dbReference>
<dbReference type="HAMAP" id="MF_04070">
    <property type="entry name" value="INFV_NCAP"/>
    <property type="match status" value="1"/>
</dbReference>
<dbReference type="InterPro" id="IPR002141">
    <property type="entry name" value="Flu_NP"/>
</dbReference>
<dbReference type="Pfam" id="PF00506">
    <property type="entry name" value="Flu_NP"/>
    <property type="match status" value="1"/>
</dbReference>
<dbReference type="SUPFAM" id="SSF161003">
    <property type="entry name" value="flu NP-like"/>
    <property type="match status" value="1"/>
</dbReference>
<gene>
    <name evidence="1" type="primary">NP</name>
</gene>
<proteinExistence type="inferred from homology"/>
<accession>Q08031</accession>
<feature type="chain" id="PRO_0000079082" description="Nucleoprotein">
    <location>
        <begin position="1"/>
        <end position="498"/>
    </location>
</feature>
<feature type="region of interest" description="Disordered" evidence="2">
    <location>
        <begin position="1"/>
        <end position="21"/>
    </location>
</feature>
<feature type="short sequence motif" description="Unconventional nuclear localization signal" evidence="1">
    <location>
        <begin position="1"/>
        <end position="18"/>
    </location>
</feature>
<feature type="short sequence motif" description="Bipartite nuclear localization signal" evidence="1">
    <location>
        <begin position="198"/>
        <end position="216"/>
    </location>
</feature>
<feature type="compositionally biased region" description="Basic and acidic residues" evidence="2">
    <location>
        <begin position="8"/>
        <end position="21"/>
    </location>
</feature>